<organism>
    <name type="scientific">Haemophilus influenzae (strain ATCC 51907 / DSM 11121 / KW20 / Rd)</name>
    <dbReference type="NCBI Taxonomy" id="71421"/>
    <lineage>
        <taxon>Bacteria</taxon>
        <taxon>Pseudomonadati</taxon>
        <taxon>Pseudomonadota</taxon>
        <taxon>Gammaproteobacteria</taxon>
        <taxon>Pasteurellales</taxon>
        <taxon>Pasteurellaceae</taxon>
        <taxon>Haemophilus</taxon>
    </lineage>
</organism>
<dbReference type="EC" id="2.7.7.7"/>
<dbReference type="EMBL" id="L42023">
    <property type="protein sequence ID" value="AAC21808.1"/>
    <property type="molecule type" value="Genomic_DNA"/>
</dbReference>
<dbReference type="PIR" id="B64050">
    <property type="entry name" value="B64050"/>
</dbReference>
<dbReference type="RefSeq" id="NP_438306.1">
    <property type="nucleotide sequence ID" value="NC_000907.1"/>
</dbReference>
<dbReference type="STRING" id="71421.HI_0137"/>
<dbReference type="EnsemblBacteria" id="AAC21808">
    <property type="protein sequence ID" value="AAC21808"/>
    <property type="gene ID" value="HI_0137"/>
</dbReference>
<dbReference type="KEGG" id="hin:HI_0137"/>
<dbReference type="PATRIC" id="fig|71421.8.peg.139"/>
<dbReference type="eggNOG" id="COG0847">
    <property type="taxonomic scope" value="Bacteria"/>
</dbReference>
<dbReference type="HOGENOM" id="CLU_047806_2_0_6"/>
<dbReference type="OrthoDB" id="9804290at2"/>
<dbReference type="PhylomeDB" id="P43745"/>
<dbReference type="BioCyc" id="HINF71421:G1GJ1-149-MONOMER"/>
<dbReference type="Proteomes" id="UP000000579">
    <property type="component" value="Chromosome"/>
</dbReference>
<dbReference type="GO" id="GO:0005829">
    <property type="term" value="C:cytosol"/>
    <property type="evidence" value="ECO:0000318"/>
    <property type="project" value="GO_Central"/>
</dbReference>
<dbReference type="GO" id="GO:0008408">
    <property type="term" value="F:3'-5' exonuclease activity"/>
    <property type="evidence" value="ECO:0000318"/>
    <property type="project" value="GO_Central"/>
</dbReference>
<dbReference type="GO" id="GO:0003677">
    <property type="term" value="F:DNA binding"/>
    <property type="evidence" value="ECO:0007669"/>
    <property type="project" value="InterPro"/>
</dbReference>
<dbReference type="GO" id="GO:0003887">
    <property type="term" value="F:DNA-directed DNA polymerase activity"/>
    <property type="evidence" value="ECO:0007669"/>
    <property type="project" value="UniProtKB-KW"/>
</dbReference>
<dbReference type="GO" id="GO:0046872">
    <property type="term" value="F:metal ion binding"/>
    <property type="evidence" value="ECO:0007669"/>
    <property type="project" value="UniProtKB-KW"/>
</dbReference>
<dbReference type="GO" id="GO:0045004">
    <property type="term" value="P:DNA replication proofreading"/>
    <property type="evidence" value="ECO:0000318"/>
    <property type="project" value="GO_Central"/>
</dbReference>
<dbReference type="CDD" id="cd06131">
    <property type="entry name" value="DNA_pol_III_epsilon_Ecoli_like"/>
    <property type="match status" value="1"/>
</dbReference>
<dbReference type="FunFam" id="3.30.420.10:FF:000012">
    <property type="entry name" value="DNA polymerase III subunit epsilon"/>
    <property type="match status" value="1"/>
</dbReference>
<dbReference type="Gene3D" id="3.30.420.10">
    <property type="entry name" value="Ribonuclease H-like superfamily/Ribonuclease H"/>
    <property type="match status" value="1"/>
</dbReference>
<dbReference type="InterPro" id="IPR006054">
    <property type="entry name" value="DnaQ"/>
</dbReference>
<dbReference type="InterPro" id="IPR006309">
    <property type="entry name" value="DnaQ_proteo"/>
</dbReference>
<dbReference type="InterPro" id="IPR013520">
    <property type="entry name" value="Exonuclease_RNaseT/DNA_pol3"/>
</dbReference>
<dbReference type="InterPro" id="IPR012337">
    <property type="entry name" value="RNaseH-like_sf"/>
</dbReference>
<dbReference type="InterPro" id="IPR036397">
    <property type="entry name" value="RNaseH_sf"/>
</dbReference>
<dbReference type="NCBIfam" id="TIGR00573">
    <property type="entry name" value="dnaq"/>
    <property type="match status" value="1"/>
</dbReference>
<dbReference type="NCBIfam" id="TIGR01406">
    <property type="entry name" value="dnaQ_proteo"/>
    <property type="match status" value="1"/>
</dbReference>
<dbReference type="NCBIfam" id="NF004316">
    <property type="entry name" value="PRK05711.1"/>
    <property type="match status" value="1"/>
</dbReference>
<dbReference type="PANTHER" id="PTHR30231">
    <property type="entry name" value="DNA POLYMERASE III SUBUNIT EPSILON"/>
    <property type="match status" value="1"/>
</dbReference>
<dbReference type="PANTHER" id="PTHR30231:SF41">
    <property type="entry name" value="DNA POLYMERASE III SUBUNIT EPSILON"/>
    <property type="match status" value="1"/>
</dbReference>
<dbReference type="Pfam" id="PF00929">
    <property type="entry name" value="RNase_T"/>
    <property type="match status" value="1"/>
</dbReference>
<dbReference type="SMART" id="SM00479">
    <property type="entry name" value="EXOIII"/>
    <property type="match status" value="1"/>
</dbReference>
<dbReference type="SUPFAM" id="SSF53098">
    <property type="entry name" value="Ribonuclease H-like"/>
    <property type="match status" value="1"/>
</dbReference>
<comment type="function">
    <text evidence="1">DNA polymerase III is a complex, multichain enzyme responsible for most of the replicative synthesis in bacteria. The epsilon subunit contain the editing function and is a proofreading 3'-5' exonuclease (By similarity).</text>
</comment>
<comment type="catalytic activity">
    <reaction>
        <text>DNA(n) + a 2'-deoxyribonucleoside 5'-triphosphate = DNA(n+1) + diphosphate</text>
        <dbReference type="Rhea" id="RHEA:22508"/>
        <dbReference type="Rhea" id="RHEA-COMP:17339"/>
        <dbReference type="Rhea" id="RHEA-COMP:17340"/>
        <dbReference type="ChEBI" id="CHEBI:33019"/>
        <dbReference type="ChEBI" id="CHEBI:61560"/>
        <dbReference type="ChEBI" id="CHEBI:173112"/>
        <dbReference type="EC" id="2.7.7.7"/>
    </reaction>
</comment>
<comment type="cofactor">
    <cofactor evidence="1">
        <name>Mg(2+)</name>
        <dbReference type="ChEBI" id="CHEBI:18420"/>
    </cofactor>
    <cofactor evidence="1">
        <name>Mn(2+)</name>
        <dbReference type="ChEBI" id="CHEBI:29035"/>
    </cofactor>
    <text evidence="1">Binds 2 divalent metal cations. Magnesium or manganese.</text>
</comment>
<comment type="subunit">
    <text evidence="1">DNA polymerase III contains a core (composed of alpha, epsilon and theta chains) that associates with a tau subunit. This core dimerizes to form the POLIII' complex. PolIII' associates with the gamma complex (composed of gamma, delta, delta', psi and chi chains) and with the beta chain to form the complete DNA polymerase III complex (By similarity).</text>
</comment>
<proteinExistence type="inferred from homology"/>
<protein>
    <recommendedName>
        <fullName>DNA polymerase III subunit epsilon</fullName>
        <ecNumber>2.7.7.7</ecNumber>
    </recommendedName>
</protein>
<reference key="1">
    <citation type="journal article" date="1995" name="Science">
        <title>Whole-genome random sequencing and assembly of Haemophilus influenzae Rd.</title>
        <authorList>
            <person name="Fleischmann R.D."/>
            <person name="Adams M.D."/>
            <person name="White O."/>
            <person name="Clayton R.A."/>
            <person name="Kirkness E.F."/>
            <person name="Kerlavage A.R."/>
            <person name="Bult C.J."/>
            <person name="Tomb J.-F."/>
            <person name="Dougherty B.A."/>
            <person name="Merrick J.M."/>
            <person name="McKenney K."/>
            <person name="Sutton G.G."/>
            <person name="FitzHugh W."/>
            <person name="Fields C.A."/>
            <person name="Gocayne J.D."/>
            <person name="Scott J.D."/>
            <person name="Shirley R."/>
            <person name="Liu L.-I."/>
            <person name="Glodek A."/>
            <person name="Kelley J.M."/>
            <person name="Weidman J.F."/>
            <person name="Phillips C.A."/>
            <person name="Spriggs T."/>
            <person name="Hedblom E."/>
            <person name="Cotton M.D."/>
            <person name="Utterback T.R."/>
            <person name="Hanna M.C."/>
            <person name="Nguyen D.T."/>
            <person name="Saudek D.M."/>
            <person name="Brandon R.C."/>
            <person name="Fine L.D."/>
            <person name="Fritchman J.L."/>
            <person name="Fuhrmann J.L."/>
            <person name="Geoghagen N.S.M."/>
            <person name="Gnehm C.L."/>
            <person name="McDonald L.A."/>
            <person name="Small K.V."/>
            <person name="Fraser C.M."/>
            <person name="Smith H.O."/>
            <person name="Venter J.C."/>
        </authorList>
    </citation>
    <scope>NUCLEOTIDE SEQUENCE [LARGE SCALE GENOMIC DNA]</scope>
    <source>
        <strain>ATCC 51907 / DSM 11121 / KW20 / Rd</strain>
    </source>
</reference>
<evidence type="ECO:0000250" key="1"/>
<name>DPO3E_HAEIN</name>
<gene>
    <name type="primary">dnaQ</name>
    <name type="ordered locus">HI_0137</name>
</gene>
<accession>P43745</accession>
<sequence length="256" mass="29133">MINPNRQIVLDTETTGMNQLGAHYEGHCIIEIGAVELINRRYTGNNXHIYIKPDRPXDPDAIKVHGITDEMLADKPEFKEVAQDFLDYINGAELLIHNAPFDVGFMDYEFRKLNLNVKTDDICLVTDTLQMARQMYPGKRNNLDALCDRLGIDNSKRTLHGALLDAEILADVYLMMTGGQTNLFDEEESVESGVIRVMQEKTAEEIKSAVDFSHNLKLLQPTNDELQAHLEFLKMMNKKSGNNCLWDKRFGNNNVH</sequence>
<keyword id="KW-0235">DNA replication</keyword>
<keyword id="KW-0239">DNA-directed DNA polymerase</keyword>
<keyword id="KW-0269">Exonuclease</keyword>
<keyword id="KW-0378">Hydrolase</keyword>
<keyword id="KW-0460">Magnesium</keyword>
<keyword id="KW-0464">Manganese</keyword>
<keyword id="KW-0479">Metal-binding</keyword>
<keyword id="KW-0540">Nuclease</keyword>
<keyword id="KW-0548">Nucleotidyltransferase</keyword>
<keyword id="KW-1185">Reference proteome</keyword>
<keyword id="KW-0808">Transferase</keyword>
<feature type="chain" id="PRO_0000105486" description="DNA polymerase III subunit epsilon">
    <location>
        <begin position="1"/>
        <end position="256"/>
    </location>
</feature>
<feature type="active site" description="Proton acceptor" evidence="1">
    <location>
        <position position="160"/>
    </location>
</feature>
<feature type="binding site" evidence="1">
    <location>
        <position position="11"/>
    </location>
    <ligand>
        <name>a divalent metal cation</name>
        <dbReference type="ChEBI" id="CHEBI:60240"/>
        <label>1</label>
        <note>catalytic</note>
    </ligand>
</feature>
<feature type="binding site" evidence="1">
    <location>
        <position position="11"/>
    </location>
    <ligand>
        <name>a divalent metal cation</name>
        <dbReference type="ChEBI" id="CHEBI:60240"/>
        <label>2</label>
        <note>catalytic</note>
    </ligand>
</feature>
<feature type="binding site" evidence="1">
    <location>
        <position position="11"/>
    </location>
    <ligand>
        <name>substrate</name>
    </ligand>
</feature>
<feature type="binding site" evidence="1">
    <location>
        <position position="13"/>
    </location>
    <ligand>
        <name>a divalent metal cation</name>
        <dbReference type="ChEBI" id="CHEBI:60240"/>
        <label>1</label>
        <note>catalytic</note>
    </ligand>
</feature>
<feature type="binding site" evidence="1">
    <location>
        <position position="13"/>
    </location>
    <ligand>
        <name>substrate</name>
    </ligand>
</feature>
<feature type="binding site" evidence="1">
    <location>
        <position position="60"/>
    </location>
    <ligand>
        <name>substrate</name>
    </ligand>
</feature>
<feature type="binding site" evidence="1">
    <location>
        <position position="65"/>
    </location>
    <ligand>
        <name>substrate</name>
    </ligand>
</feature>
<feature type="binding site" evidence="1">
    <location>
        <position position="165"/>
    </location>
    <ligand>
        <name>a divalent metal cation</name>
        <dbReference type="ChEBI" id="CHEBI:60240"/>
        <label>1</label>
        <note>catalytic</note>
    </ligand>
</feature>
<feature type="binding site" evidence="1">
    <location>
        <position position="165"/>
    </location>
    <ligand>
        <name>substrate</name>
    </ligand>
</feature>